<reference key="1">
    <citation type="journal article" date="2006" name="Mol. Microbiol.">
        <title>Role of pathogenicity island-associated integrases in the genome plasticity of uropathogenic Escherichia coli strain 536.</title>
        <authorList>
            <person name="Hochhut B."/>
            <person name="Wilde C."/>
            <person name="Balling G."/>
            <person name="Middendorf B."/>
            <person name="Dobrindt U."/>
            <person name="Brzuszkiewicz E."/>
            <person name="Gottschalk G."/>
            <person name="Carniel E."/>
            <person name="Hacker J."/>
        </authorList>
    </citation>
    <scope>NUCLEOTIDE SEQUENCE [LARGE SCALE GENOMIC DNA]</scope>
    <source>
        <strain>536 / UPEC</strain>
    </source>
</reference>
<gene>
    <name evidence="1" type="primary">frsA</name>
    <name type="ordered locus">ECP_0268</name>
</gene>
<proteinExistence type="inferred from homology"/>
<comment type="function">
    <text evidence="1">Catalyzes the hydrolysis of esters.</text>
</comment>
<comment type="catalytic activity">
    <reaction evidence="1">
        <text>a carboxylic ester + H2O = an alcohol + a carboxylate + H(+)</text>
        <dbReference type="Rhea" id="RHEA:21164"/>
        <dbReference type="ChEBI" id="CHEBI:15377"/>
        <dbReference type="ChEBI" id="CHEBI:15378"/>
        <dbReference type="ChEBI" id="CHEBI:29067"/>
        <dbReference type="ChEBI" id="CHEBI:30879"/>
        <dbReference type="ChEBI" id="CHEBI:33308"/>
        <dbReference type="EC" id="3.1.1.1"/>
    </reaction>
</comment>
<comment type="similarity">
    <text evidence="1">Belongs to the FrsA family.</text>
</comment>
<protein>
    <recommendedName>
        <fullName evidence="1">Esterase FrsA</fullName>
        <ecNumber evidence="1">3.1.1.1</ecNumber>
    </recommendedName>
</protein>
<sequence>MTQANLSETLFKPRFKHPETSTLVRRFSHGAQPPVQSALDGKTIPHWYRMINRLMWIWRGIDPREILDVQARIVMSDAERTDDDLYDTVIGYRGGNWIYEWATQAMVWQQKACAEEDPQLSGRHWLHAATLYNIAAYPHLKGDDLAEQAQALSNRAYEEAAQRLPGTMRQMEFTVPGGAPITGFLHMPKGDGPFPTVLMCGGLDAMQTDYYSLYERYFAPRGIAMLTIDMPSVGFSSKWKLTQDSSLLHQHVLKALPNVPWVDHTRVAAFGFRFGANVAVRLAYLESPRLKVVACLGPVVHTLLSDFKCQQQVPEMYLDVLASRLGMHDASDEALRVELNRYSLKVQGLLGRRCPTPMLSGYWKNDPFSPEEDSRLITSSSADGKLLEIPFNPVYRNFDKGLQEITDWIEKRLC</sequence>
<organism>
    <name type="scientific">Escherichia coli O6:K15:H31 (strain 536 / UPEC)</name>
    <dbReference type="NCBI Taxonomy" id="362663"/>
    <lineage>
        <taxon>Bacteria</taxon>
        <taxon>Pseudomonadati</taxon>
        <taxon>Pseudomonadota</taxon>
        <taxon>Gammaproteobacteria</taxon>
        <taxon>Enterobacterales</taxon>
        <taxon>Enterobacteriaceae</taxon>
        <taxon>Escherichia</taxon>
    </lineage>
</organism>
<keyword id="KW-0378">Hydrolase</keyword>
<keyword id="KW-0719">Serine esterase</keyword>
<feature type="chain" id="PRO_1000064480" description="Esterase FrsA">
    <location>
        <begin position="1"/>
        <end position="414"/>
    </location>
</feature>
<name>FRSA_ECOL5</name>
<evidence type="ECO:0000255" key="1">
    <source>
        <dbReference type="HAMAP-Rule" id="MF_01063"/>
    </source>
</evidence>
<dbReference type="EC" id="3.1.1.1" evidence="1"/>
<dbReference type="EMBL" id="CP000247">
    <property type="protein sequence ID" value="ABG68304.1"/>
    <property type="molecule type" value="Genomic_DNA"/>
</dbReference>
<dbReference type="RefSeq" id="WP_000189578.1">
    <property type="nucleotide sequence ID" value="NC_008253.1"/>
</dbReference>
<dbReference type="SMR" id="Q0TL77"/>
<dbReference type="ESTHER" id="ecoli-yafa">
    <property type="family name" value="Duf_1100-R"/>
</dbReference>
<dbReference type="KEGG" id="ecp:ECP_0268"/>
<dbReference type="HOGENOM" id="CLU_036819_0_0_6"/>
<dbReference type="Proteomes" id="UP000009182">
    <property type="component" value="Chromosome"/>
</dbReference>
<dbReference type="GO" id="GO:0106435">
    <property type="term" value="F:carboxylesterase activity"/>
    <property type="evidence" value="ECO:0007669"/>
    <property type="project" value="UniProtKB-EC"/>
</dbReference>
<dbReference type="FunFam" id="3.40.50.1820:FF:000022">
    <property type="entry name" value="Esterase FrsA"/>
    <property type="match status" value="1"/>
</dbReference>
<dbReference type="Gene3D" id="3.40.50.1820">
    <property type="entry name" value="alpha/beta hydrolase"/>
    <property type="match status" value="1"/>
</dbReference>
<dbReference type="HAMAP" id="MF_01063">
    <property type="entry name" value="FrsA"/>
    <property type="match status" value="1"/>
</dbReference>
<dbReference type="InterPro" id="IPR029058">
    <property type="entry name" value="AB_hydrolase_fold"/>
</dbReference>
<dbReference type="InterPro" id="IPR043423">
    <property type="entry name" value="FrsA"/>
</dbReference>
<dbReference type="InterPro" id="IPR010520">
    <property type="entry name" value="FrsA-like"/>
</dbReference>
<dbReference type="InterPro" id="IPR050261">
    <property type="entry name" value="FrsA_esterase"/>
</dbReference>
<dbReference type="NCBIfam" id="NF003460">
    <property type="entry name" value="PRK05077.1"/>
    <property type="match status" value="1"/>
</dbReference>
<dbReference type="PANTHER" id="PTHR22946">
    <property type="entry name" value="DIENELACTONE HYDROLASE DOMAIN-CONTAINING PROTEIN-RELATED"/>
    <property type="match status" value="1"/>
</dbReference>
<dbReference type="PANTHER" id="PTHR22946:SF4">
    <property type="entry name" value="ESTERASE FRSA"/>
    <property type="match status" value="1"/>
</dbReference>
<dbReference type="Pfam" id="PF06500">
    <property type="entry name" value="FrsA-like"/>
    <property type="match status" value="1"/>
</dbReference>
<dbReference type="SUPFAM" id="SSF53474">
    <property type="entry name" value="alpha/beta-Hydrolases"/>
    <property type="match status" value="1"/>
</dbReference>
<accession>Q0TL77</accession>